<evidence type="ECO:0000255" key="1">
    <source>
        <dbReference type="HAMAP-Rule" id="MF_00012"/>
    </source>
</evidence>
<keyword id="KW-0001">2Fe-2S</keyword>
<keyword id="KW-0028">Amino-acid biosynthesis</keyword>
<keyword id="KW-0100">Branched-chain amino acid biosynthesis</keyword>
<keyword id="KW-0408">Iron</keyword>
<keyword id="KW-0411">Iron-sulfur</keyword>
<keyword id="KW-0456">Lyase</keyword>
<keyword id="KW-0460">Magnesium</keyword>
<keyword id="KW-0479">Metal-binding</keyword>
<name>ILVD_SHIBS</name>
<accession>Q31UL3</accession>
<comment type="function">
    <text evidence="1">Functions in the biosynthesis of branched-chain amino acids. Catalyzes the dehydration of (2R,3R)-2,3-dihydroxy-3-methylpentanoate (2,3-dihydroxy-3-methylvalerate) into 2-oxo-3-methylpentanoate (2-oxo-3-methylvalerate) and of (2R)-2,3-dihydroxy-3-methylbutanoate (2,3-dihydroxyisovalerate) into 2-oxo-3-methylbutanoate (2-oxoisovalerate), the penultimate precursor to L-isoleucine and L-valine, respectively.</text>
</comment>
<comment type="catalytic activity">
    <reaction evidence="1">
        <text>(2R)-2,3-dihydroxy-3-methylbutanoate = 3-methyl-2-oxobutanoate + H2O</text>
        <dbReference type="Rhea" id="RHEA:24809"/>
        <dbReference type="ChEBI" id="CHEBI:11851"/>
        <dbReference type="ChEBI" id="CHEBI:15377"/>
        <dbReference type="ChEBI" id="CHEBI:49072"/>
        <dbReference type="EC" id="4.2.1.9"/>
    </reaction>
    <physiologicalReaction direction="left-to-right" evidence="1">
        <dbReference type="Rhea" id="RHEA:24810"/>
    </physiologicalReaction>
</comment>
<comment type="catalytic activity">
    <reaction evidence="1">
        <text>(2R,3R)-2,3-dihydroxy-3-methylpentanoate = (S)-3-methyl-2-oxopentanoate + H2O</text>
        <dbReference type="Rhea" id="RHEA:27694"/>
        <dbReference type="ChEBI" id="CHEBI:15377"/>
        <dbReference type="ChEBI" id="CHEBI:35146"/>
        <dbReference type="ChEBI" id="CHEBI:49258"/>
        <dbReference type="EC" id="4.2.1.9"/>
    </reaction>
    <physiologicalReaction direction="left-to-right" evidence="1">
        <dbReference type="Rhea" id="RHEA:27695"/>
    </physiologicalReaction>
</comment>
<comment type="cofactor">
    <cofactor evidence="1">
        <name>[2Fe-2S] cluster</name>
        <dbReference type="ChEBI" id="CHEBI:190135"/>
    </cofactor>
    <text evidence="1">Binds 1 [2Fe-2S] cluster per subunit. This cluster acts as a Lewis acid cofactor.</text>
</comment>
<comment type="cofactor">
    <cofactor evidence="1">
        <name>Mg(2+)</name>
        <dbReference type="ChEBI" id="CHEBI:18420"/>
    </cofactor>
</comment>
<comment type="pathway">
    <text evidence="1">Amino-acid biosynthesis; L-isoleucine biosynthesis; L-isoleucine from 2-oxobutanoate: step 3/4.</text>
</comment>
<comment type="pathway">
    <text evidence="1">Amino-acid biosynthesis; L-valine biosynthesis; L-valine from pyruvate: step 3/4.</text>
</comment>
<comment type="subunit">
    <text evidence="1">Homodimer.</text>
</comment>
<comment type="similarity">
    <text evidence="1">Belongs to the IlvD/Edd family.</text>
</comment>
<reference key="1">
    <citation type="journal article" date="2005" name="Nucleic Acids Res.">
        <title>Genome dynamics and diversity of Shigella species, the etiologic agents of bacillary dysentery.</title>
        <authorList>
            <person name="Yang F."/>
            <person name="Yang J."/>
            <person name="Zhang X."/>
            <person name="Chen L."/>
            <person name="Jiang Y."/>
            <person name="Yan Y."/>
            <person name="Tang X."/>
            <person name="Wang J."/>
            <person name="Xiong Z."/>
            <person name="Dong J."/>
            <person name="Xue Y."/>
            <person name="Zhu Y."/>
            <person name="Xu X."/>
            <person name="Sun L."/>
            <person name="Chen S."/>
            <person name="Nie H."/>
            <person name="Peng J."/>
            <person name="Xu J."/>
            <person name="Wang Y."/>
            <person name="Yuan Z."/>
            <person name="Wen Y."/>
            <person name="Yao Z."/>
            <person name="Shen Y."/>
            <person name="Qiang B."/>
            <person name="Hou Y."/>
            <person name="Yu J."/>
            <person name="Jin Q."/>
        </authorList>
    </citation>
    <scope>NUCLEOTIDE SEQUENCE [LARGE SCALE GENOMIC DNA]</scope>
    <source>
        <strain>Sb227</strain>
    </source>
</reference>
<feature type="chain" id="PRO_0000225421" description="Dihydroxy-acid dehydratase">
    <location>
        <begin position="1"/>
        <end position="616"/>
    </location>
</feature>
<feature type="active site" description="Proton acceptor" evidence="1">
    <location>
        <position position="517"/>
    </location>
</feature>
<feature type="binding site" evidence="1">
    <location>
        <position position="81"/>
    </location>
    <ligand>
        <name>Mg(2+)</name>
        <dbReference type="ChEBI" id="CHEBI:18420"/>
    </ligand>
</feature>
<feature type="binding site" evidence="1">
    <location>
        <position position="122"/>
    </location>
    <ligand>
        <name>[2Fe-2S] cluster</name>
        <dbReference type="ChEBI" id="CHEBI:190135"/>
    </ligand>
</feature>
<feature type="binding site" evidence="1">
    <location>
        <position position="123"/>
    </location>
    <ligand>
        <name>Mg(2+)</name>
        <dbReference type="ChEBI" id="CHEBI:18420"/>
    </ligand>
</feature>
<feature type="binding site" description="via carbamate group" evidence="1">
    <location>
        <position position="124"/>
    </location>
    <ligand>
        <name>Mg(2+)</name>
        <dbReference type="ChEBI" id="CHEBI:18420"/>
    </ligand>
</feature>
<feature type="binding site" evidence="1">
    <location>
        <position position="195"/>
    </location>
    <ligand>
        <name>[2Fe-2S] cluster</name>
        <dbReference type="ChEBI" id="CHEBI:190135"/>
    </ligand>
</feature>
<feature type="binding site" evidence="1">
    <location>
        <position position="491"/>
    </location>
    <ligand>
        <name>Mg(2+)</name>
        <dbReference type="ChEBI" id="CHEBI:18420"/>
    </ligand>
</feature>
<feature type="modified residue" description="N6-carboxylysine" evidence="1">
    <location>
        <position position="124"/>
    </location>
</feature>
<organism>
    <name type="scientific">Shigella boydii serotype 4 (strain Sb227)</name>
    <dbReference type="NCBI Taxonomy" id="300268"/>
    <lineage>
        <taxon>Bacteria</taxon>
        <taxon>Pseudomonadati</taxon>
        <taxon>Pseudomonadota</taxon>
        <taxon>Gammaproteobacteria</taxon>
        <taxon>Enterobacterales</taxon>
        <taxon>Enterobacteriaceae</taxon>
        <taxon>Shigella</taxon>
    </lineage>
</organism>
<proteinExistence type="inferred from homology"/>
<sequence length="616" mass="65546">MPKYRSATTTHGRNMAGARALWRATGMTDADFGKPIIAVVNSFTQFVPGHVHLRDLGKLVAEQIEAAGGVAKEFNTIAVDDGIAMGHGGMLYSLPSRELIADSVEYMVNAHCADAMVCISNCDKITPGMLMASLRLNIPVIFVSGGPMEAGKTKLSDQIIKLDLVDAMIQGADPKVSDSQSDQVERSACPTCGSCSGMFTANSMNCLTEALGLSQPGNGSLLATHADRKQLFLNAGKRIVELTKRYYEQNDESALPRNIASKAAFENAMTLDIAMGGSTNTVLHLLAAAQEAEIDFTMSDIDKLSRKVPQLCKVAPSTQKYHMEDVHRAGGVIGILGELDRAGLLNRDVKNVLGLTLPQTLEQYDVMLTQDDAVKNMFRAGPAGIRTTQAFSQDCRWDTLDDDRANGCIRSLEHAYSKDGGLAVLYGNFAENGCIVKTAGVDDSILKFTGPAKVYESQDDAVEAILGGKVVAGDVVVIRYEGPKGGPGMQEMLYPTSFLKSMGLGKACALITDGRFSGGTSGLSIGHVSPEAASGGSIGLIEDGDLIAIDIPNRGIQLQVSDAELAARREAQEARGDKAWTPKNRERQVSFALRAYASLATSADKGAVRDKSKLGG</sequence>
<gene>
    <name evidence="1" type="primary">ilvD</name>
    <name type="ordered locus">SBO_3782</name>
</gene>
<dbReference type="EC" id="4.2.1.9" evidence="1"/>
<dbReference type="EMBL" id="CP000036">
    <property type="protein sequence ID" value="ABB68245.1"/>
    <property type="molecule type" value="Genomic_DNA"/>
</dbReference>
<dbReference type="RefSeq" id="WP_001127401.1">
    <property type="nucleotide sequence ID" value="NC_007613.1"/>
</dbReference>
<dbReference type="SMR" id="Q31UL3"/>
<dbReference type="KEGG" id="sbo:SBO_3782"/>
<dbReference type="HOGENOM" id="CLU_014271_4_2_6"/>
<dbReference type="UniPathway" id="UPA00047">
    <property type="reaction ID" value="UER00057"/>
</dbReference>
<dbReference type="UniPathway" id="UPA00049">
    <property type="reaction ID" value="UER00061"/>
</dbReference>
<dbReference type="Proteomes" id="UP000007067">
    <property type="component" value="Chromosome"/>
</dbReference>
<dbReference type="GO" id="GO:0005829">
    <property type="term" value="C:cytosol"/>
    <property type="evidence" value="ECO:0007669"/>
    <property type="project" value="TreeGrafter"/>
</dbReference>
<dbReference type="GO" id="GO:0051537">
    <property type="term" value="F:2 iron, 2 sulfur cluster binding"/>
    <property type="evidence" value="ECO:0007669"/>
    <property type="project" value="UniProtKB-UniRule"/>
</dbReference>
<dbReference type="GO" id="GO:0004160">
    <property type="term" value="F:dihydroxy-acid dehydratase activity"/>
    <property type="evidence" value="ECO:0007669"/>
    <property type="project" value="UniProtKB-UniRule"/>
</dbReference>
<dbReference type="GO" id="GO:0000287">
    <property type="term" value="F:magnesium ion binding"/>
    <property type="evidence" value="ECO:0007669"/>
    <property type="project" value="UniProtKB-UniRule"/>
</dbReference>
<dbReference type="GO" id="GO:0009097">
    <property type="term" value="P:isoleucine biosynthetic process"/>
    <property type="evidence" value="ECO:0007669"/>
    <property type="project" value="UniProtKB-UniRule"/>
</dbReference>
<dbReference type="GO" id="GO:0009099">
    <property type="term" value="P:L-valine biosynthetic process"/>
    <property type="evidence" value="ECO:0007669"/>
    <property type="project" value="UniProtKB-UniRule"/>
</dbReference>
<dbReference type="FunFam" id="3.50.30.80:FF:000001">
    <property type="entry name" value="Dihydroxy-acid dehydratase"/>
    <property type="match status" value="1"/>
</dbReference>
<dbReference type="Gene3D" id="3.50.30.80">
    <property type="entry name" value="IlvD/EDD C-terminal domain-like"/>
    <property type="match status" value="1"/>
</dbReference>
<dbReference type="HAMAP" id="MF_00012">
    <property type="entry name" value="IlvD"/>
    <property type="match status" value="1"/>
</dbReference>
<dbReference type="InterPro" id="IPR042096">
    <property type="entry name" value="Dihydro-acid_dehy_C"/>
</dbReference>
<dbReference type="InterPro" id="IPR004404">
    <property type="entry name" value="DihydroxyA_deHydtase"/>
</dbReference>
<dbReference type="InterPro" id="IPR020558">
    <property type="entry name" value="DiOHA_6PGluconate_deHydtase_CS"/>
</dbReference>
<dbReference type="InterPro" id="IPR056740">
    <property type="entry name" value="ILV_EDD_C"/>
</dbReference>
<dbReference type="InterPro" id="IPR000581">
    <property type="entry name" value="ILV_EDD_N"/>
</dbReference>
<dbReference type="InterPro" id="IPR037237">
    <property type="entry name" value="IlvD/EDD_N"/>
</dbReference>
<dbReference type="NCBIfam" id="TIGR00110">
    <property type="entry name" value="ilvD"/>
    <property type="match status" value="1"/>
</dbReference>
<dbReference type="NCBIfam" id="NF009103">
    <property type="entry name" value="PRK12448.1"/>
    <property type="match status" value="1"/>
</dbReference>
<dbReference type="PANTHER" id="PTHR43661">
    <property type="entry name" value="D-XYLONATE DEHYDRATASE"/>
    <property type="match status" value="1"/>
</dbReference>
<dbReference type="PANTHER" id="PTHR43661:SF3">
    <property type="entry name" value="D-XYLONATE DEHYDRATASE YAGF-RELATED"/>
    <property type="match status" value="1"/>
</dbReference>
<dbReference type="Pfam" id="PF24877">
    <property type="entry name" value="ILV_EDD_C"/>
    <property type="match status" value="1"/>
</dbReference>
<dbReference type="Pfam" id="PF00920">
    <property type="entry name" value="ILVD_EDD_N"/>
    <property type="match status" value="1"/>
</dbReference>
<dbReference type="SUPFAM" id="SSF143975">
    <property type="entry name" value="IlvD/EDD N-terminal domain-like"/>
    <property type="match status" value="1"/>
</dbReference>
<dbReference type="SUPFAM" id="SSF52016">
    <property type="entry name" value="LeuD/IlvD-like"/>
    <property type="match status" value="1"/>
</dbReference>
<dbReference type="PROSITE" id="PS00886">
    <property type="entry name" value="ILVD_EDD_1"/>
    <property type="match status" value="1"/>
</dbReference>
<dbReference type="PROSITE" id="PS00887">
    <property type="entry name" value="ILVD_EDD_2"/>
    <property type="match status" value="1"/>
</dbReference>
<protein>
    <recommendedName>
        <fullName evidence="1">Dihydroxy-acid dehydratase</fullName>
        <shortName evidence="1">DAD</shortName>
        <ecNumber evidence="1">4.2.1.9</ecNumber>
    </recommendedName>
</protein>